<name>Y1691_LEGPH</name>
<organism>
    <name type="scientific">Legionella pneumophila subsp. pneumophila (strain Philadelphia 1 / ATCC 33152 / DSM 7513)</name>
    <dbReference type="NCBI Taxonomy" id="272624"/>
    <lineage>
        <taxon>Bacteria</taxon>
        <taxon>Pseudomonadati</taxon>
        <taxon>Pseudomonadota</taxon>
        <taxon>Gammaproteobacteria</taxon>
        <taxon>Legionellales</taxon>
        <taxon>Legionellaceae</taxon>
        <taxon>Legionella</taxon>
    </lineage>
</organism>
<protein>
    <recommendedName>
        <fullName>Uncharacterized transporter lpg1691</fullName>
    </recommendedName>
</protein>
<proteinExistence type="inferred from homology"/>
<sequence length="464" mass="50778">MNHSKKVLNVFSLVMINVIAVDSLRTLPISAKLGFSLVFYYIFAALTFFIPVALVAAELATAYPNTGGIYVWVREAFGRRAGFITIWLQWIYNVVWYPTMLAFIAATLSYLIAPHLGNNKFYLLGTALTLFWVFTFLNCFGMKLSSIVSIIGASIGTLLPMIVIIVLGAVWIFQDRPVAVNYPTTWLPDFSSLGNLSLFSAVLFGLIGMEMSAVHAEEVKNPQRDYPKALFYSALLIISTLSLGSLAIVIVVPNDSLSVVSGLVDAYAIFFNSYNMPWMTSVIAVLIILGGLSGVSAWIIGPTKGLLVSARDGSLPALFSRVNKYGSPVAILLTQGVIFTVLSTVFILLDSINAAYWVLSDLSAQMALLVYIMMFAAAIKLRYSKPEQPRGYTIPGGNLVMSLISGIGIICCIAAMIVGFIPPSQIPIKNVFLFECFLIGGLILFVFIPWLFAKKHDEQLCSEE</sequence>
<reference key="1">
    <citation type="journal article" date="2004" name="Science">
        <title>The genomic sequence of the accidental pathogen Legionella pneumophila.</title>
        <authorList>
            <person name="Chien M."/>
            <person name="Morozova I."/>
            <person name="Shi S."/>
            <person name="Sheng H."/>
            <person name="Chen J."/>
            <person name="Gomez S.M."/>
            <person name="Asamani G."/>
            <person name="Hill K."/>
            <person name="Nuara J."/>
            <person name="Feder M."/>
            <person name="Rineer J."/>
            <person name="Greenberg J.J."/>
            <person name="Steshenko V."/>
            <person name="Park S.H."/>
            <person name="Zhao B."/>
            <person name="Teplitskaya E."/>
            <person name="Edwards J.R."/>
            <person name="Pampou S."/>
            <person name="Georghiou A."/>
            <person name="Chou I.-C."/>
            <person name="Iannuccilli W."/>
            <person name="Ulz M.E."/>
            <person name="Kim D.H."/>
            <person name="Geringer-Sameth A."/>
            <person name="Goldsberry C."/>
            <person name="Morozov P."/>
            <person name="Fischer S.G."/>
            <person name="Segal G."/>
            <person name="Qu X."/>
            <person name="Rzhetsky A."/>
            <person name="Zhang P."/>
            <person name="Cayanis E."/>
            <person name="De Jong P.J."/>
            <person name="Ju J."/>
            <person name="Kalachikov S."/>
            <person name="Shuman H.A."/>
            <person name="Russo J.J."/>
        </authorList>
    </citation>
    <scope>NUCLEOTIDE SEQUENCE [LARGE SCALE GENOMIC DNA]</scope>
    <source>
        <strain>Philadelphia 1 / ATCC 33152 / DSM 7513</strain>
    </source>
</reference>
<reference key="2">
    <citation type="journal article" date="1993" name="J. Bacteriol.">
        <title>The major iron-containing protein of Legionella pneumophila is an aconitase homologous with the human iron-responsive element-binding protein.</title>
        <authorList>
            <person name="Mengaud J.M."/>
            <person name="Horwitz M.A."/>
        </authorList>
    </citation>
    <scope>NUCLEOTIDE SEQUENCE [GENOMIC DNA] OF 1-57</scope>
</reference>
<gene>
    <name type="ordered locus">lpg1691</name>
</gene>
<dbReference type="EMBL" id="AE017354">
    <property type="protein sequence ID" value="AAU27771.1"/>
    <property type="molecule type" value="Genomic_DNA"/>
</dbReference>
<dbReference type="EMBL" id="L22081">
    <property type="protein sequence ID" value="AAA25296.1"/>
    <property type="molecule type" value="Genomic_DNA"/>
</dbReference>
<dbReference type="PIR" id="C48642">
    <property type="entry name" value="C48642"/>
</dbReference>
<dbReference type="RefSeq" id="WP_010947418.1">
    <property type="nucleotide sequence ID" value="NC_002942.5"/>
</dbReference>
<dbReference type="RefSeq" id="YP_095718.1">
    <property type="nucleotide sequence ID" value="NC_002942.5"/>
</dbReference>
<dbReference type="SMR" id="P37034"/>
<dbReference type="STRING" id="272624.lpg1691"/>
<dbReference type="PaxDb" id="272624-lpg1691"/>
<dbReference type="KEGG" id="lpn:lpg1691"/>
<dbReference type="PATRIC" id="fig|272624.6.peg.1772"/>
<dbReference type="eggNOG" id="COG0531">
    <property type="taxonomic scope" value="Bacteria"/>
</dbReference>
<dbReference type="HOGENOM" id="CLU_020854_4_2_6"/>
<dbReference type="OrthoDB" id="3185104at2"/>
<dbReference type="Proteomes" id="UP000000609">
    <property type="component" value="Chromosome"/>
</dbReference>
<dbReference type="GO" id="GO:0005886">
    <property type="term" value="C:plasma membrane"/>
    <property type="evidence" value="ECO:0007669"/>
    <property type="project" value="UniProtKB-SubCell"/>
</dbReference>
<dbReference type="GO" id="GO:0022857">
    <property type="term" value="F:transmembrane transporter activity"/>
    <property type="evidence" value="ECO:0007669"/>
    <property type="project" value="InterPro"/>
</dbReference>
<dbReference type="Gene3D" id="1.20.1740.10">
    <property type="entry name" value="Amino acid/polyamine transporter I"/>
    <property type="match status" value="1"/>
</dbReference>
<dbReference type="InterPro" id="IPR002293">
    <property type="entry name" value="AA/rel_permease1"/>
</dbReference>
<dbReference type="InterPro" id="IPR050367">
    <property type="entry name" value="APC_superfamily"/>
</dbReference>
<dbReference type="PANTHER" id="PTHR42770">
    <property type="entry name" value="AMINO ACID TRANSPORTER-RELATED"/>
    <property type="match status" value="1"/>
</dbReference>
<dbReference type="PANTHER" id="PTHR42770:SF15">
    <property type="entry name" value="GLUTAMATE_GAMMA-AMINOBUTYRATE ANTIPORTER-RELATED"/>
    <property type="match status" value="1"/>
</dbReference>
<dbReference type="Pfam" id="PF13520">
    <property type="entry name" value="AA_permease_2"/>
    <property type="match status" value="1"/>
</dbReference>
<dbReference type="PIRSF" id="PIRSF006060">
    <property type="entry name" value="AA_transporter"/>
    <property type="match status" value="1"/>
</dbReference>
<evidence type="ECO:0000255" key="1"/>
<evidence type="ECO:0000305" key="2"/>
<comment type="subcellular location">
    <subcellularLocation>
        <location evidence="2">Cell membrane</location>
        <topology evidence="2">Multi-pass membrane protein</topology>
    </subcellularLocation>
</comment>
<comment type="similarity">
    <text evidence="2">Belongs to the amino acid-polyamine-organocation (APC) superfamily.</text>
</comment>
<accession>P37034</accession>
<accession>Q5ZUV1</accession>
<feature type="chain" id="PRO_0000054223" description="Uncharacterized transporter lpg1691">
    <location>
        <begin position="1"/>
        <end position="464"/>
    </location>
</feature>
<feature type="transmembrane region" description="Helical" evidence="1">
    <location>
        <begin position="7"/>
        <end position="27"/>
    </location>
</feature>
<feature type="transmembrane region" description="Helical" evidence="1">
    <location>
        <begin position="37"/>
        <end position="57"/>
    </location>
</feature>
<feature type="transmembrane region" description="Helical" evidence="1">
    <location>
        <begin position="94"/>
        <end position="114"/>
    </location>
</feature>
<feature type="transmembrane region" description="Helical" evidence="1">
    <location>
        <begin position="121"/>
        <end position="141"/>
    </location>
</feature>
<feature type="transmembrane region" description="Helical" evidence="1">
    <location>
        <begin position="153"/>
        <end position="173"/>
    </location>
</feature>
<feature type="transmembrane region" description="Helical" evidence="1">
    <location>
        <begin position="196"/>
        <end position="216"/>
    </location>
</feature>
<feature type="transmembrane region" description="Helical" evidence="1">
    <location>
        <begin position="231"/>
        <end position="251"/>
    </location>
</feature>
<feature type="transmembrane region" description="Helical" evidence="1">
    <location>
        <begin position="282"/>
        <end position="302"/>
    </location>
</feature>
<feature type="transmembrane region" description="Helical" evidence="1">
    <location>
        <begin position="329"/>
        <end position="349"/>
    </location>
</feature>
<feature type="transmembrane region" description="Helical" evidence="1">
    <location>
        <begin position="359"/>
        <end position="379"/>
    </location>
</feature>
<feature type="transmembrane region" description="Helical" evidence="1">
    <location>
        <begin position="401"/>
        <end position="421"/>
    </location>
</feature>
<feature type="transmembrane region" description="Helical" evidence="1">
    <location>
        <begin position="432"/>
        <end position="452"/>
    </location>
</feature>
<keyword id="KW-1003">Cell membrane</keyword>
<keyword id="KW-0472">Membrane</keyword>
<keyword id="KW-1185">Reference proteome</keyword>
<keyword id="KW-0812">Transmembrane</keyword>
<keyword id="KW-1133">Transmembrane helix</keyword>
<keyword id="KW-0813">Transport</keyword>